<evidence type="ECO:0000255" key="1">
    <source>
        <dbReference type="HAMAP-Rule" id="MF_00170"/>
    </source>
</evidence>
<gene>
    <name evidence="1" type="primary">rpiA</name>
    <name type="ordered locus">EcolC_0796</name>
</gene>
<dbReference type="EC" id="5.3.1.6" evidence="1"/>
<dbReference type="EMBL" id="CP000946">
    <property type="protein sequence ID" value="ACA76468.1"/>
    <property type="molecule type" value="Genomic_DNA"/>
</dbReference>
<dbReference type="RefSeq" id="WP_000189743.1">
    <property type="nucleotide sequence ID" value="NZ_MTFT01000004.1"/>
</dbReference>
<dbReference type="SMR" id="B1IT89"/>
<dbReference type="GeneID" id="93779085"/>
<dbReference type="KEGG" id="ecl:EcolC_0796"/>
<dbReference type="HOGENOM" id="CLU_056590_1_1_6"/>
<dbReference type="UniPathway" id="UPA00115">
    <property type="reaction ID" value="UER00412"/>
</dbReference>
<dbReference type="GO" id="GO:0005829">
    <property type="term" value="C:cytosol"/>
    <property type="evidence" value="ECO:0007669"/>
    <property type="project" value="TreeGrafter"/>
</dbReference>
<dbReference type="GO" id="GO:0004751">
    <property type="term" value="F:ribose-5-phosphate isomerase activity"/>
    <property type="evidence" value="ECO:0007669"/>
    <property type="project" value="UniProtKB-UniRule"/>
</dbReference>
<dbReference type="GO" id="GO:0006014">
    <property type="term" value="P:D-ribose metabolic process"/>
    <property type="evidence" value="ECO:0007669"/>
    <property type="project" value="TreeGrafter"/>
</dbReference>
<dbReference type="GO" id="GO:0009052">
    <property type="term" value="P:pentose-phosphate shunt, non-oxidative branch"/>
    <property type="evidence" value="ECO:0007669"/>
    <property type="project" value="UniProtKB-UniRule"/>
</dbReference>
<dbReference type="CDD" id="cd01398">
    <property type="entry name" value="RPI_A"/>
    <property type="match status" value="1"/>
</dbReference>
<dbReference type="FunFam" id="3.30.70.260:FF:000004">
    <property type="entry name" value="Ribose-5-phosphate isomerase A"/>
    <property type="match status" value="1"/>
</dbReference>
<dbReference type="FunFam" id="3.40.50.1360:FF:000001">
    <property type="entry name" value="Ribose-5-phosphate isomerase A"/>
    <property type="match status" value="1"/>
</dbReference>
<dbReference type="Gene3D" id="3.30.70.260">
    <property type="match status" value="1"/>
</dbReference>
<dbReference type="Gene3D" id="3.40.50.1360">
    <property type="match status" value="1"/>
</dbReference>
<dbReference type="HAMAP" id="MF_00170">
    <property type="entry name" value="Rib_5P_isom_A"/>
    <property type="match status" value="1"/>
</dbReference>
<dbReference type="InterPro" id="IPR037171">
    <property type="entry name" value="NagB/RpiA_transferase-like"/>
</dbReference>
<dbReference type="InterPro" id="IPR020672">
    <property type="entry name" value="Ribose5P_isomerase_typA_subgr"/>
</dbReference>
<dbReference type="InterPro" id="IPR004788">
    <property type="entry name" value="Ribose5P_isomerase_type_A"/>
</dbReference>
<dbReference type="NCBIfam" id="NF001924">
    <property type="entry name" value="PRK00702.1"/>
    <property type="match status" value="1"/>
</dbReference>
<dbReference type="NCBIfam" id="TIGR00021">
    <property type="entry name" value="rpiA"/>
    <property type="match status" value="1"/>
</dbReference>
<dbReference type="PANTHER" id="PTHR11934">
    <property type="entry name" value="RIBOSE-5-PHOSPHATE ISOMERASE"/>
    <property type="match status" value="1"/>
</dbReference>
<dbReference type="PANTHER" id="PTHR11934:SF0">
    <property type="entry name" value="RIBOSE-5-PHOSPHATE ISOMERASE"/>
    <property type="match status" value="1"/>
</dbReference>
<dbReference type="Pfam" id="PF06026">
    <property type="entry name" value="Rib_5-P_isom_A"/>
    <property type="match status" value="1"/>
</dbReference>
<dbReference type="SUPFAM" id="SSF75445">
    <property type="entry name" value="D-ribose-5-phosphate isomerase (RpiA), lid domain"/>
    <property type="match status" value="1"/>
</dbReference>
<dbReference type="SUPFAM" id="SSF100950">
    <property type="entry name" value="NagB/RpiA/CoA transferase-like"/>
    <property type="match status" value="1"/>
</dbReference>
<proteinExistence type="inferred from homology"/>
<comment type="function">
    <text evidence="1">Catalyzes the reversible conversion of ribose-5-phosphate to ribulose 5-phosphate.</text>
</comment>
<comment type="catalytic activity">
    <reaction evidence="1">
        <text>aldehydo-D-ribose 5-phosphate = D-ribulose 5-phosphate</text>
        <dbReference type="Rhea" id="RHEA:14657"/>
        <dbReference type="ChEBI" id="CHEBI:58121"/>
        <dbReference type="ChEBI" id="CHEBI:58273"/>
        <dbReference type="EC" id="5.3.1.6"/>
    </reaction>
</comment>
<comment type="pathway">
    <text evidence="1">Carbohydrate degradation; pentose phosphate pathway; D-ribose 5-phosphate from D-ribulose 5-phosphate (non-oxidative stage): step 1/1.</text>
</comment>
<comment type="subunit">
    <text evidence="1">Homodimer.</text>
</comment>
<comment type="similarity">
    <text evidence="1">Belongs to the ribose 5-phosphate isomerase family.</text>
</comment>
<accession>B1IT89</accession>
<keyword id="KW-0413">Isomerase</keyword>
<sequence length="219" mass="22860">MTQDELKKAVGWAALQYVQPGTIVGVGTGSTAAHFIDALGTMKGQIEGAVSSSDASTEKLKSLGIHVFDLNEVDSLGIYVDGADEINGHMQMIKGGGAALTREKIIASVAEKFICIADASKQVDILGKFPLPVEVIPMARSAVARQLVKLGGRPEYRQGVVTDNGNVILDVHGMEILDPIAMENAINAIPGVVTVGLFANRGADVALIGTPDGVKTIVK</sequence>
<feature type="chain" id="PRO_1000077066" description="Ribose-5-phosphate isomerase A">
    <location>
        <begin position="1"/>
        <end position="219"/>
    </location>
</feature>
<feature type="active site" description="Proton acceptor" evidence="1">
    <location>
        <position position="103"/>
    </location>
</feature>
<feature type="binding site" evidence="1">
    <location>
        <begin position="28"/>
        <end position="31"/>
    </location>
    <ligand>
        <name>substrate</name>
    </ligand>
</feature>
<feature type="binding site" evidence="1">
    <location>
        <begin position="81"/>
        <end position="84"/>
    </location>
    <ligand>
        <name>substrate</name>
    </ligand>
</feature>
<feature type="binding site" evidence="1">
    <location>
        <begin position="94"/>
        <end position="97"/>
    </location>
    <ligand>
        <name>substrate</name>
    </ligand>
</feature>
<feature type="binding site" evidence="1">
    <location>
        <position position="121"/>
    </location>
    <ligand>
        <name>substrate</name>
    </ligand>
</feature>
<organism>
    <name type="scientific">Escherichia coli (strain ATCC 8739 / DSM 1576 / NBRC 3972 / NCIMB 8545 / WDCM 00012 / Crooks)</name>
    <dbReference type="NCBI Taxonomy" id="481805"/>
    <lineage>
        <taxon>Bacteria</taxon>
        <taxon>Pseudomonadati</taxon>
        <taxon>Pseudomonadota</taxon>
        <taxon>Gammaproteobacteria</taxon>
        <taxon>Enterobacterales</taxon>
        <taxon>Enterobacteriaceae</taxon>
        <taxon>Escherichia</taxon>
    </lineage>
</organism>
<reference key="1">
    <citation type="submission" date="2008-02" db="EMBL/GenBank/DDBJ databases">
        <title>Complete sequence of Escherichia coli C str. ATCC 8739.</title>
        <authorList>
            <person name="Copeland A."/>
            <person name="Lucas S."/>
            <person name="Lapidus A."/>
            <person name="Glavina del Rio T."/>
            <person name="Dalin E."/>
            <person name="Tice H."/>
            <person name="Bruce D."/>
            <person name="Goodwin L."/>
            <person name="Pitluck S."/>
            <person name="Kiss H."/>
            <person name="Brettin T."/>
            <person name="Detter J.C."/>
            <person name="Han C."/>
            <person name="Kuske C.R."/>
            <person name="Schmutz J."/>
            <person name="Larimer F."/>
            <person name="Land M."/>
            <person name="Hauser L."/>
            <person name="Kyrpides N."/>
            <person name="Mikhailova N."/>
            <person name="Ingram L."/>
            <person name="Richardson P."/>
        </authorList>
    </citation>
    <scope>NUCLEOTIDE SEQUENCE [LARGE SCALE GENOMIC DNA]</scope>
    <source>
        <strain>ATCC 8739 / DSM 1576 / NBRC 3972 / NCIMB 8545 / WDCM 00012 / Crooks</strain>
    </source>
</reference>
<protein>
    <recommendedName>
        <fullName evidence="1">Ribose-5-phosphate isomerase A</fullName>
        <ecNumber evidence="1">5.3.1.6</ecNumber>
    </recommendedName>
    <alternativeName>
        <fullName evidence="1">Phosphoriboisomerase A</fullName>
        <shortName evidence="1">PRI</shortName>
    </alternativeName>
</protein>
<name>RPIA_ECOLC</name>